<gene>
    <name evidence="1" type="primary">tmcAL</name>
    <name type="ordered locus">Bcer98_2628</name>
</gene>
<sequence>MQQTKKLTQCDVTIAVMSGSFLQRGEPALVSKWYRTKMALAGGIDLVVELPYAFATQKAETFANGAISILNALGVSDICFGSEDGHVQHFYNTLSLQQKKQNTFNQLVQQYISEGNSYAKATSEAFSHILSGHDTIDMSQPNNILGLHYIQAILSQKSTIRAHTIKRFAAHYHDESFTNKHIASATSIRKQLFIGDCSFTSIYPFVPNCTSSLLEEYYHIYHVLHNWETYFPLFKYKLLTMSAKELQHIYEMEEGLEHRILAKIQNATSFLTFMEAIKTKRYTWTRLQRVCTHILTNTTKEEIKSAAIENHAPYIRLLGMSQKGQSYLSKNKKQMSLPLLTHTKTFEHPVLNIERRANAVYLSALQEPLRTKCIQQNITQYPIRYNEIDKTFL</sequence>
<feature type="chain" id="PRO_1000087620" description="tRNA(Met) cytidine acetate ligase">
    <location>
        <begin position="1"/>
        <end position="393"/>
    </location>
</feature>
<feature type="binding site" evidence="1">
    <location>
        <position position="81"/>
    </location>
    <ligand>
        <name>ATP</name>
        <dbReference type="ChEBI" id="CHEBI:30616"/>
    </ligand>
</feature>
<feature type="binding site" evidence="1">
    <location>
        <position position="142"/>
    </location>
    <ligand>
        <name>ATP</name>
        <dbReference type="ChEBI" id="CHEBI:30616"/>
    </ligand>
</feature>
<feature type="binding site" evidence="1">
    <location>
        <position position="167"/>
    </location>
    <ligand>
        <name>ATP</name>
        <dbReference type="ChEBI" id="CHEBI:30616"/>
    </ligand>
</feature>
<name>TMCAL_BACCN</name>
<reference key="1">
    <citation type="journal article" date="2008" name="Chem. Biol. Interact.">
        <title>Extending the Bacillus cereus group genomics to putative food-borne pathogens of different toxicity.</title>
        <authorList>
            <person name="Lapidus A."/>
            <person name="Goltsman E."/>
            <person name="Auger S."/>
            <person name="Galleron N."/>
            <person name="Segurens B."/>
            <person name="Dossat C."/>
            <person name="Land M.L."/>
            <person name="Broussolle V."/>
            <person name="Brillard J."/>
            <person name="Guinebretiere M.-H."/>
            <person name="Sanchis V."/>
            <person name="Nguen-the C."/>
            <person name="Lereclus D."/>
            <person name="Richardson P."/>
            <person name="Wincker P."/>
            <person name="Weissenbach J."/>
            <person name="Ehrlich S.D."/>
            <person name="Sorokin A."/>
        </authorList>
    </citation>
    <scope>NUCLEOTIDE SEQUENCE [LARGE SCALE GENOMIC DNA]</scope>
    <source>
        <strain>DSM 22905 / CIP 110041 / 391-98 / NVH 391-98</strain>
    </source>
</reference>
<dbReference type="EC" id="6.3.4.-" evidence="1"/>
<dbReference type="EMBL" id="CP000764">
    <property type="protein sequence ID" value="ABS22862.1"/>
    <property type="molecule type" value="Genomic_DNA"/>
</dbReference>
<dbReference type="SMR" id="A7GRV4"/>
<dbReference type="STRING" id="315749.Bcer98_2628"/>
<dbReference type="KEGG" id="bcy:Bcer98_2628"/>
<dbReference type="eggNOG" id="COG1323">
    <property type="taxonomic scope" value="Bacteria"/>
</dbReference>
<dbReference type="HOGENOM" id="CLU_038915_0_2_9"/>
<dbReference type="Proteomes" id="UP000002300">
    <property type="component" value="Chromosome"/>
</dbReference>
<dbReference type="GO" id="GO:0005737">
    <property type="term" value="C:cytoplasm"/>
    <property type="evidence" value="ECO:0007669"/>
    <property type="project" value="UniProtKB-SubCell"/>
</dbReference>
<dbReference type="GO" id="GO:0005524">
    <property type="term" value="F:ATP binding"/>
    <property type="evidence" value="ECO:0007669"/>
    <property type="project" value="UniProtKB-KW"/>
</dbReference>
<dbReference type="GO" id="GO:0016879">
    <property type="term" value="F:ligase activity, forming carbon-nitrogen bonds"/>
    <property type="evidence" value="ECO:0007669"/>
    <property type="project" value="UniProtKB-UniRule"/>
</dbReference>
<dbReference type="GO" id="GO:0000049">
    <property type="term" value="F:tRNA binding"/>
    <property type="evidence" value="ECO:0007669"/>
    <property type="project" value="UniProtKB-KW"/>
</dbReference>
<dbReference type="GO" id="GO:0006400">
    <property type="term" value="P:tRNA modification"/>
    <property type="evidence" value="ECO:0007669"/>
    <property type="project" value="UniProtKB-UniRule"/>
</dbReference>
<dbReference type="Gene3D" id="3.40.50.620">
    <property type="entry name" value="HUPs"/>
    <property type="match status" value="1"/>
</dbReference>
<dbReference type="HAMAP" id="MF_01539">
    <property type="entry name" value="TmcAL"/>
    <property type="match status" value="1"/>
</dbReference>
<dbReference type="InterPro" id="IPR014729">
    <property type="entry name" value="Rossmann-like_a/b/a_fold"/>
</dbReference>
<dbReference type="InterPro" id="IPR008513">
    <property type="entry name" value="tRNA(Met)_cyd_acetate_ligase"/>
</dbReference>
<dbReference type="NCBIfam" id="NF010191">
    <property type="entry name" value="PRK13670.1"/>
    <property type="match status" value="1"/>
</dbReference>
<dbReference type="PANTHER" id="PTHR37825">
    <property type="entry name" value="TRNA(MET) CYTIDINE ACETATE LIGASE"/>
    <property type="match status" value="1"/>
</dbReference>
<dbReference type="PANTHER" id="PTHR37825:SF1">
    <property type="entry name" value="TRNA(MET) CYTIDINE ACETATE LIGASE"/>
    <property type="match status" value="1"/>
</dbReference>
<dbReference type="Pfam" id="PF05636">
    <property type="entry name" value="HIGH_NTase1"/>
    <property type="match status" value="1"/>
</dbReference>
<dbReference type="SUPFAM" id="SSF52374">
    <property type="entry name" value="Nucleotidylyl transferase"/>
    <property type="match status" value="1"/>
</dbReference>
<keyword id="KW-0067">ATP-binding</keyword>
<keyword id="KW-0963">Cytoplasm</keyword>
<keyword id="KW-0436">Ligase</keyword>
<keyword id="KW-0547">Nucleotide-binding</keyword>
<keyword id="KW-0694">RNA-binding</keyword>
<keyword id="KW-0819">tRNA processing</keyword>
<keyword id="KW-0820">tRNA-binding</keyword>
<proteinExistence type="inferred from homology"/>
<protein>
    <recommendedName>
        <fullName evidence="1">tRNA(Met) cytidine acetate ligase</fullName>
        <ecNumber evidence="1">6.3.4.-</ecNumber>
    </recommendedName>
</protein>
<organism>
    <name type="scientific">Bacillus cytotoxicus (strain DSM 22905 / CIP 110041 / 391-98 / NVH 391-98)</name>
    <dbReference type="NCBI Taxonomy" id="315749"/>
    <lineage>
        <taxon>Bacteria</taxon>
        <taxon>Bacillati</taxon>
        <taxon>Bacillota</taxon>
        <taxon>Bacilli</taxon>
        <taxon>Bacillales</taxon>
        <taxon>Bacillaceae</taxon>
        <taxon>Bacillus</taxon>
        <taxon>Bacillus cereus group</taxon>
    </lineage>
</organism>
<accession>A7GRV4</accession>
<comment type="function">
    <text evidence="1">Catalyzes the formation of N(4)-acetylcytidine (ac(4)C) at the wobble position of elongator tRNA(Met), using acetate and ATP as substrates. First activates an acetate ion to form acetyladenylate (Ac-AMP) and then transfers the acetyl group to tRNA to form ac(4)C34.</text>
</comment>
<comment type="catalytic activity">
    <reaction evidence="1">
        <text>cytidine(34) in elongator tRNA(Met) + acetate + ATP = N(4)-acetylcytidine(34) in elongator tRNA(Met) + AMP + diphosphate</text>
        <dbReference type="Rhea" id="RHEA:58144"/>
        <dbReference type="Rhea" id="RHEA-COMP:10693"/>
        <dbReference type="Rhea" id="RHEA-COMP:10694"/>
        <dbReference type="ChEBI" id="CHEBI:30089"/>
        <dbReference type="ChEBI" id="CHEBI:30616"/>
        <dbReference type="ChEBI" id="CHEBI:33019"/>
        <dbReference type="ChEBI" id="CHEBI:74900"/>
        <dbReference type="ChEBI" id="CHEBI:82748"/>
        <dbReference type="ChEBI" id="CHEBI:456215"/>
    </reaction>
</comment>
<comment type="subcellular location">
    <subcellularLocation>
        <location evidence="1">Cytoplasm</location>
    </subcellularLocation>
</comment>
<comment type="similarity">
    <text evidence="1">Belongs to the TmcAL family.</text>
</comment>
<evidence type="ECO:0000255" key="1">
    <source>
        <dbReference type="HAMAP-Rule" id="MF_01539"/>
    </source>
</evidence>